<gene>
    <name type="ordered locus">MJ0934</name>
</gene>
<proteinExistence type="predicted"/>
<keyword id="KW-0004">4Fe-4S</keyword>
<keyword id="KW-0249">Electron transport</keyword>
<keyword id="KW-0408">Iron</keyword>
<keyword id="KW-0411">Iron-sulfur</keyword>
<keyword id="KW-0479">Metal-binding</keyword>
<keyword id="KW-1185">Reference proteome</keyword>
<keyword id="KW-0677">Repeat</keyword>
<keyword id="KW-0813">Transport</keyword>
<sequence length="209" mass="23567">MRFMEEEFYKIFKGAGLIKTLIRSIFLTNRNKFSKPSKTKPIQLTECIGCGLCVDVCPTNAIKIFSFRETICSVCGTCVDVCPNNAIIKDRFTIDADKCTKCGVCVLFCPIPIIKKEIPKPKTPVILKDRCNSCGLCECEAIDIINKEINPEKCKLCLSCIEKCPLQAILTPDEYINSLIVKVDIDSCIFCRECEEICPIRGNYEHRES</sequence>
<dbReference type="EMBL" id="L77117">
    <property type="protein sequence ID" value="AAB98939.1"/>
    <property type="molecule type" value="Genomic_DNA"/>
</dbReference>
<dbReference type="PIR" id="F64416">
    <property type="entry name" value="F64416"/>
</dbReference>
<dbReference type="SMR" id="Q58344"/>
<dbReference type="FunCoup" id="Q58344">
    <property type="interactions" value="6"/>
</dbReference>
<dbReference type="STRING" id="243232.MJ_0934"/>
<dbReference type="PaxDb" id="243232-MJ_0934"/>
<dbReference type="EnsemblBacteria" id="AAB98939">
    <property type="protein sequence ID" value="AAB98939"/>
    <property type="gene ID" value="MJ_0934"/>
</dbReference>
<dbReference type="KEGG" id="mja:MJ_0934"/>
<dbReference type="eggNOG" id="arCOG02184">
    <property type="taxonomic scope" value="Archaea"/>
</dbReference>
<dbReference type="HOGENOM" id="CLU_1521877_0_0_2"/>
<dbReference type="InParanoid" id="Q58344"/>
<dbReference type="PhylomeDB" id="Q58344"/>
<dbReference type="Proteomes" id="UP000000805">
    <property type="component" value="Chromosome"/>
</dbReference>
<dbReference type="GO" id="GO:0051539">
    <property type="term" value="F:4 iron, 4 sulfur cluster binding"/>
    <property type="evidence" value="ECO:0007669"/>
    <property type="project" value="UniProtKB-KW"/>
</dbReference>
<dbReference type="GO" id="GO:0046872">
    <property type="term" value="F:metal ion binding"/>
    <property type="evidence" value="ECO:0007669"/>
    <property type="project" value="UniProtKB-KW"/>
</dbReference>
<dbReference type="GO" id="GO:0016491">
    <property type="term" value="F:oxidoreductase activity"/>
    <property type="evidence" value="ECO:0007669"/>
    <property type="project" value="UniProtKB-ARBA"/>
</dbReference>
<dbReference type="Gene3D" id="3.30.70.20">
    <property type="match status" value="2"/>
</dbReference>
<dbReference type="Gene3D" id="3.30.70.3270">
    <property type="match status" value="1"/>
</dbReference>
<dbReference type="InterPro" id="IPR017896">
    <property type="entry name" value="4Fe4S_Fe-S-bd"/>
</dbReference>
<dbReference type="InterPro" id="IPR017900">
    <property type="entry name" value="4Fe4S_Fe_S_CS"/>
</dbReference>
<dbReference type="InterPro" id="IPR050572">
    <property type="entry name" value="Fe-S_Ferredoxin"/>
</dbReference>
<dbReference type="PANTHER" id="PTHR43687">
    <property type="entry name" value="ADENYLYLSULFATE REDUCTASE, BETA SUBUNIT"/>
    <property type="match status" value="1"/>
</dbReference>
<dbReference type="PANTHER" id="PTHR43687:SF6">
    <property type="entry name" value="L-ASPARTATE SEMIALDEHYDE SULFURTRANSFERASE IRON-SULFUR SUBUNIT"/>
    <property type="match status" value="1"/>
</dbReference>
<dbReference type="Pfam" id="PF00037">
    <property type="entry name" value="Fer4"/>
    <property type="match status" value="3"/>
</dbReference>
<dbReference type="Pfam" id="PF13237">
    <property type="entry name" value="Fer4_10"/>
    <property type="match status" value="1"/>
</dbReference>
<dbReference type="SUPFAM" id="SSF54862">
    <property type="entry name" value="4Fe-4S ferredoxins"/>
    <property type="match status" value="1"/>
</dbReference>
<dbReference type="SUPFAM" id="SSF46548">
    <property type="entry name" value="alpha-helical ferredoxin"/>
    <property type="match status" value="1"/>
</dbReference>
<dbReference type="PROSITE" id="PS00198">
    <property type="entry name" value="4FE4S_FER_1"/>
    <property type="match status" value="5"/>
</dbReference>
<dbReference type="PROSITE" id="PS51379">
    <property type="entry name" value="4FE4S_FER_2"/>
    <property type="match status" value="6"/>
</dbReference>
<protein>
    <recommendedName>
        <fullName>Uncharacterized polyferredoxin-like protein MJ0934</fullName>
    </recommendedName>
</protein>
<reference key="1">
    <citation type="journal article" date="1996" name="Science">
        <title>Complete genome sequence of the methanogenic archaeon, Methanococcus jannaschii.</title>
        <authorList>
            <person name="Bult C.J."/>
            <person name="White O."/>
            <person name="Olsen G.J."/>
            <person name="Zhou L."/>
            <person name="Fleischmann R.D."/>
            <person name="Sutton G.G."/>
            <person name="Blake J.A."/>
            <person name="FitzGerald L.M."/>
            <person name="Clayton R.A."/>
            <person name="Gocayne J.D."/>
            <person name="Kerlavage A.R."/>
            <person name="Dougherty B.A."/>
            <person name="Tomb J.-F."/>
            <person name="Adams M.D."/>
            <person name="Reich C.I."/>
            <person name="Overbeek R."/>
            <person name="Kirkness E.F."/>
            <person name="Weinstock K.G."/>
            <person name="Merrick J.M."/>
            <person name="Glodek A."/>
            <person name="Scott J.L."/>
            <person name="Geoghagen N.S.M."/>
            <person name="Weidman J.F."/>
            <person name="Fuhrmann J.L."/>
            <person name="Nguyen D."/>
            <person name="Utterback T.R."/>
            <person name="Kelley J.M."/>
            <person name="Peterson J.D."/>
            <person name="Sadow P.W."/>
            <person name="Hanna M.C."/>
            <person name="Cotton M.D."/>
            <person name="Roberts K.M."/>
            <person name="Hurst M.A."/>
            <person name="Kaine B.P."/>
            <person name="Borodovsky M."/>
            <person name="Klenk H.-P."/>
            <person name="Fraser C.M."/>
            <person name="Smith H.O."/>
            <person name="Woese C.R."/>
            <person name="Venter J.C."/>
        </authorList>
    </citation>
    <scope>NUCLEOTIDE SEQUENCE [LARGE SCALE GENOMIC DNA]</scope>
    <source>
        <strain>ATCC 43067 / DSM 2661 / JAL-1 / JCM 10045 / NBRC 100440</strain>
    </source>
</reference>
<organism>
    <name type="scientific">Methanocaldococcus jannaschii (strain ATCC 43067 / DSM 2661 / JAL-1 / JCM 10045 / NBRC 100440)</name>
    <name type="common">Methanococcus jannaschii</name>
    <dbReference type="NCBI Taxonomy" id="243232"/>
    <lineage>
        <taxon>Archaea</taxon>
        <taxon>Methanobacteriati</taxon>
        <taxon>Methanobacteriota</taxon>
        <taxon>Methanomada group</taxon>
        <taxon>Methanococci</taxon>
        <taxon>Methanococcales</taxon>
        <taxon>Methanocaldococcaceae</taxon>
        <taxon>Methanocaldococcus</taxon>
    </lineage>
</organism>
<evidence type="ECO:0000255" key="1"/>
<evidence type="ECO:0000255" key="2">
    <source>
        <dbReference type="PROSITE-ProRule" id="PRU00711"/>
    </source>
</evidence>
<accession>Q58344</accession>
<feature type="chain" id="PRO_0000159151" description="Uncharacterized polyferredoxin-like protein MJ0934">
    <location>
        <begin position="1"/>
        <end position="209"/>
    </location>
</feature>
<feature type="domain" description="4Fe-4S ferredoxin-type 1" evidence="2">
    <location>
        <begin position="38"/>
        <end position="67"/>
    </location>
</feature>
<feature type="domain" description="4Fe-4S ferredoxin-type 2" evidence="2">
    <location>
        <begin position="63"/>
        <end position="92"/>
    </location>
</feature>
<feature type="domain" description="4Fe-4S ferredoxin-type 3" evidence="2">
    <location>
        <begin position="90"/>
        <end position="119"/>
    </location>
</feature>
<feature type="domain" description="4Fe-4S ferredoxin-type 4" evidence="2">
    <location>
        <begin position="122"/>
        <end position="151"/>
    </location>
</feature>
<feature type="domain" description="4Fe-4S ferredoxin-type 5" evidence="2">
    <location>
        <begin position="145"/>
        <end position="174"/>
    </location>
</feature>
<feature type="domain" description="4Fe-4S ferredoxin-type 6" evidence="2">
    <location>
        <begin position="179"/>
        <end position="209"/>
    </location>
</feature>
<feature type="binding site" evidence="1">
    <location>
        <position position="47"/>
    </location>
    <ligand>
        <name>[4Fe-4S] cluster</name>
        <dbReference type="ChEBI" id="CHEBI:49883"/>
    </ligand>
</feature>
<feature type="binding site" evidence="1">
    <location>
        <position position="50"/>
    </location>
    <ligand>
        <name>[4Fe-4S] cluster</name>
        <dbReference type="ChEBI" id="CHEBI:49883"/>
    </ligand>
</feature>
<feature type="binding site" evidence="1">
    <location>
        <position position="53"/>
    </location>
    <ligand>
        <name>[4Fe-4S] cluster</name>
        <dbReference type="ChEBI" id="CHEBI:49883"/>
    </ligand>
</feature>
<feature type="binding site" evidence="1">
    <location>
        <position position="57"/>
    </location>
    <ligand>
        <name>[4Fe-4S] cluster</name>
        <dbReference type="ChEBI" id="CHEBI:49883"/>
    </ligand>
</feature>
<feature type="binding site" evidence="1">
    <location>
        <position position="72"/>
    </location>
    <ligand>
        <name>[4Fe-4S] cluster</name>
        <dbReference type="ChEBI" id="CHEBI:49883"/>
    </ligand>
</feature>
<feature type="binding site" evidence="1">
    <location>
        <position position="75"/>
    </location>
    <ligand>
        <name>[4Fe-4S] cluster</name>
        <dbReference type="ChEBI" id="CHEBI:49883"/>
    </ligand>
</feature>
<feature type="binding site" evidence="1">
    <location>
        <position position="78"/>
    </location>
    <ligand>
        <name>[4Fe-4S] cluster</name>
        <dbReference type="ChEBI" id="CHEBI:49883"/>
    </ligand>
</feature>
<feature type="binding site" evidence="1">
    <location>
        <position position="82"/>
    </location>
    <ligand>
        <name>[4Fe-4S] cluster</name>
        <dbReference type="ChEBI" id="CHEBI:49883"/>
    </ligand>
</feature>
<feature type="binding site" evidence="1">
    <location>
        <position position="99"/>
    </location>
    <ligand>
        <name>[4Fe-4S] cluster</name>
        <dbReference type="ChEBI" id="CHEBI:49883"/>
    </ligand>
</feature>
<feature type="binding site" evidence="1">
    <location>
        <position position="102"/>
    </location>
    <ligand>
        <name>[4Fe-4S] cluster</name>
        <dbReference type="ChEBI" id="CHEBI:49883"/>
    </ligand>
</feature>
<feature type="binding site" evidence="1">
    <location>
        <position position="105"/>
    </location>
    <ligand>
        <name>[4Fe-4S] cluster</name>
        <dbReference type="ChEBI" id="CHEBI:49883"/>
    </ligand>
</feature>
<feature type="binding site" evidence="1">
    <location>
        <position position="109"/>
    </location>
    <ligand>
        <name>[4Fe-4S] cluster</name>
        <dbReference type="ChEBI" id="CHEBI:49883"/>
    </ligand>
</feature>
<feature type="binding site" evidence="1">
    <location>
        <position position="154"/>
    </location>
    <ligand>
        <name>[4Fe-4S] cluster</name>
        <dbReference type="ChEBI" id="CHEBI:49883"/>
    </ligand>
</feature>
<feature type="binding site" evidence="1">
    <location>
        <position position="157"/>
    </location>
    <ligand>
        <name>[4Fe-4S] cluster</name>
        <dbReference type="ChEBI" id="CHEBI:49883"/>
    </ligand>
</feature>
<feature type="binding site" evidence="1">
    <location>
        <position position="160"/>
    </location>
    <ligand>
        <name>[4Fe-4S] cluster</name>
        <dbReference type="ChEBI" id="CHEBI:49883"/>
    </ligand>
</feature>
<feature type="binding site" evidence="1">
    <location>
        <position position="164"/>
    </location>
    <ligand>
        <name>[4Fe-4S] cluster</name>
        <dbReference type="ChEBI" id="CHEBI:49883"/>
    </ligand>
</feature>
<feature type="binding site" evidence="1">
    <location>
        <position position="188"/>
    </location>
    <ligand>
        <name>[4Fe-4S] cluster</name>
        <dbReference type="ChEBI" id="CHEBI:49883"/>
    </ligand>
</feature>
<feature type="binding site" evidence="1">
    <location>
        <position position="191"/>
    </location>
    <ligand>
        <name>[4Fe-4S] cluster</name>
        <dbReference type="ChEBI" id="CHEBI:49883"/>
    </ligand>
</feature>
<feature type="binding site" evidence="1">
    <location>
        <position position="194"/>
    </location>
    <ligand>
        <name>[4Fe-4S] cluster</name>
        <dbReference type="ChEBI" id="CHEBI:49883"/>
    </ligand>
</feature>
<feature type="binding site" evidence="1">
    <location>
        <position position="198"/>
    </location>
    <ligand>
        <name>[4Fe-4S] cluster</name>
        <dbReference type="ChEBI" id="CHEBI:49883"/>
    </ligand>
</feature>
<name>Y934_METJA</name>